<protein>
    <recommendedName>
        <fullName>Mitochondrial inner membrane protease ATP23</fullName>
        <ecNumber>3.4.24.-</ecNumber>
    </recommendedName>
</protein>
<sequence>MPENPSSSPTEPPEQSAAFEKWRSGLAQFTGLGLSESEKAERERLKAQGKLAKDWDKCEGWKRDLMNYSPMITFLLNHLKLAGCPFPSSAMQCHPCPENRAGGFSPDHGILLCQDRFFNKKHMEDTLAHELVHAFDHCRFKVDWGNLRHHACSEIRAANLSGDCRFTREVKRGFYAFNKQHQACVKRRAILSVLANPACTSPEMAERAVNEVWESCFTDTRPFDEIY</sequence>
<gene>
    <name type="primary">ATP23</name>
    <name type="ordered locus">CNBE3400</name>
</gene>
<name>ATP23_CRYNB</name>
<feature type="chain" id="PRO_0000410223" description="Mitochondrial inner membrane protease ATP23">
    <location>
        <begin position="1"/>
        <end position="227"/>
    </location>
</feature>
<feature type="active site" evidence="2">
    <location>
        <position position="130"/>
    </location>
</feature>
<feature type="binding site" evidence="1">
    <location>
        <position position="129"/>
    </location>
    <ligand>
        <name>a divalent metal cation</name>
        <dbReference type="ChEBI" id="CHEBI:60240"/>
        <note>catalytic</note>
    </ligand>
</feature>
<feature type="binding site" evidence="1">
    <location>
        <position position="133"/>
    </location>
    <ligand>
        <name>a divalent metal cation</name>
        <dbReference type="ChEBI" id="CHEBI:60240"/>
        <note>catalytic</note>
    </ligand>
</feature>
<comment type="function">
    <text evidence="1">Has a dual role in the assembly of mitochondrial ATPase. Acts as a protease that removes N-terminal residues of mitochondrial ATPase CF(0) subunit 6 at the intermembrane space side. Also involved in the correct assembly of the membrane-embedded ATPase CF(0) particle, probably mediating association of subunit 6 with the subunit 9 ring (By similarity).</text>
</comment>
<comment type="subcellular location">
    <subcellularLocation>
        <location>Mitochondrion inner membrane</location>
        <topology>Peripheral membrane protein</topology>
        <orientation>Intermembrane side</orientation>
    </subcellularLocation>
    <text evidence="1">Associates loosely with the inner membrane.</text>
</comment>
<comment type="similarity">
    <text evidence="3">Belongs to the peptidase M76 family.</text>
</comment>
<evidence type="ECO:0000250" key="1"/>
<evidence type="ECO:0000255" key="2">
    <source>
        <dbReference type="PROSITE-ProRule" id="PRU10095"/>
    </source>
</evidence>
<evidence type="ECO:0000305" key="3"/>
<dbReference type="EC" id="3.4.24.-"/>
<dbReference type="EMBL" id="AAEY01000028">
    <property type="protein sequence ID" value="EAL20419.1"/>
    <property type="molecule type" value="Genomic_DNA"/>
</dbReference>
<dbReference type="RefSeq" id="XP_775066.1">
    <property type="nucleotide sequence ID" value="XM_769973.1"/>
</dbReference>
<dbReference type="MEROPS" id="M76.A02"/>
<dbReference type="GeneID" id="4936350"/>
<dbReference type="KEGG" id="cnb:CNBE3400"/>
<dbReference type="VEuPathDB" id="FungiDB:CNBE3400"/>
<dbReference type="HOGENOM" id="CLU_079125_0_0_1"/>
<dbReference type="OrthoDB" id="44at5206"/>
<dbReference type="GO" id="GO:0005743">
    <property type="term" value="C:mitochondrial inner membrane"/>
    <property type="evidence" value="ECO:0007669"/>
    <property type="project" value="UniProtKB-SubCell"/>
</dbReference>
<dbReference type="GO" id="GO:0046872">
    <property type="term" value="F:metal ion binding"/>
    <property type="evidence" value="ECO:0007669"/>
    <property type="project" value="UniProtKB-KW"/>
</dbReference>
<dbReference type="GO" id="GO:0004222">
    <property type="term" value="F:metalloendopeptidase activity"/>
    <property type="evidence" value="ECO:0007669"/>
    <property type="project" value="InterPro"/>
</dbReference>
<dbReference type="GO" id="GO:0034982">
    <property type="term" value="P:mitochondrial protein processing"/>
    <property type="evidence" value="ECO:0007669"/>
    <property type="project" value="TreeGrafter"/>
</dbReference>
<dbReference type="GO" id="GO:0033615">
    <property type="term" value="P:mitochondrial proton-transporting ATP synthase complex assembly"/>
    <property type="evidence" value="ECO:0007669"/>
    <property type="project" value="TreeGrafter"/>
</dbReference>
<dbReference type="InterPro" id="IPR019165">
    <property type="entry name" value="Peptidase_M76_ATP23"/>
</dbReference>
<dbReference type="PANTHER" id="PTHR21711">
    <property type="entry name" value="MITOCHONDRIAL INNER MEMBRANE PROTEASE"/>
    <property type="match status" value="1"/>
</dbReference>
<dbReference type="PANTHER" id="PTHR21711:SF0">
    <property type="entry name" value="MITOCHONDRIAL INNER MEMBRANE PROTEASE ATP23 HOMOLOG"/>
    <property type="match status" value="1"/>
</dbReference>
<dbReference type="Pfam" id="PF09768">
    <property type="entry name" value="Peptidase_M76"/>
    <property type="match status" value="1"/>
</dbReference>
<dbReference type="PROSITE" id="PS00142">
    <property type="entry name" value="ZINC_PROTEASE"/>
    <property type="match status" value="1"/>
</dbReference>
<keyword id="KW-0378">Hydrolase</keyword>
<keyword id="KW-0472">Membrane</keyword>
<keyword id="KW-0479">Metal-binding</keyword>
<keyword id="KW-0482">Metalloprotease</keyword>
<keyword id="KW-0496">Mitochondrion</keyword>
<keyword id="KW-0999">Mitochondrion inner membrane</keyword>
<keyword id="KW-0645">Protease</keyword>
<reference key="1">
    <citation type="journal article" date="2005" name="Science">
        <title>The genome of the basidiomycetous yeast and human pathogen Cryptococcus neoformans.</title>
        <authorList>
            <person name="Loftus B.J."/>
            <person name="Fung E."/>
            <person name="Roncaglia P."/>
            <person name="Rowley D."/>
            <person name="Amedeo P."/>
            <person name="Bruno D."/>
            <person name="Vamathevan J."/>
            <person name="Miranda M."/>
            <person name="Anderson I.J."/>
            <person name="Fraser J.A."/>
            <person name="Allen J.E."/>
            <person name="Bosdet I.E."/>
            <person name="Brent M.R."/>
            <person name="Chiu R."/>
            <person name="Doering T.L."/>
            <person name="Donlin M.J."/>
            <person name="D'Souza C.A."/>
            <person name="Fox D.S."/>
            <person name="Grinberg V."/>
            <person name="Fu J."/>
            <person name="Fukushima M."/>
            <person name="Haas B.J."/>
            <person name="Huang J.C."/>
            <person name="Janbon G."/>
            <person name="Jones S.J.M."/>
            <person name="Koo H.L."/>
            <person name="Krzywinski M.I."/>
            <person name="Kwon-Chung K.J."/>
            <person name="Lengeler K.B."/>
            <person name="Maiti R."/>
            <person name="Marra M.A."/>
            <person name="Marra R.E."/>
            <person name="Mathewson C.A."/>
            <person name="Mitchell T.G."/>
            <person name="Pertea M."/>
            <person name="Riggs F.R."/>
            <person name="Salzberg S.L."/>
            <person name="Schein J.E."/>
            <person name="Shvartsbeyn A."/>
            <person name="Shin H."/>
            <person name="Shumway M."/>
            <person name="Specht C.A."/>
            <person name="Suh B.B."/>
            <person name="Tenney A."/>
            <person name="Utterback T.R."/>
            <person name="Wickes B.L."/>
            <person name="Wortman J.R."/>
            <person name="Wye N.H."/>
            <person name="Kronstad J.W."/>
            <person name="Lodge J.K."/>
            <person name="Heitman J."/>
            <person name="Davis R.W."/>
            <person name="Fraser C.M."/>
            <person name="Hyman R.W."/>
        </authorList>
    </citation>
    <scope>NUCLEOTIDE SEQUENCE [LARGE SCALE GENOMIC DNA]</scope>
    <source>
        <strain>B-3501A</strain>
    </source>
</reference>
<proteinExistence type="inferred from homology"/>
<organism>
    <name type="scientific">Cryptococcus neoformans var. neoformans serotype D (strain B-3501A)</name>
    <name type="common">Filobasidiella neoformans</name>
    <dbReference type="NCBI Taxonomy" id="283643"/>
    <lineage>
        <taxon>Eukaryota</taxon>
        <taxon>Fungi</taxon>
        <taxon>Dikarya</taxon>
        <taxon>Basidiomycota</taxon>
        <taxon>Agaricomycotina</taxon>
        <taxon>Tremellomycetes</taxon>
        <taxon>Tremellales</taxon>
        <taxon>Cryptococcaceae</taxon>
        <taxon>Cryptococcus</taxon>
        <taxon>Cryptococcus neoformans species complex</taxon>
    </lineage>
</organism>
<accession>P0CQ27</accession>
<accession>Q55S42</accession>
<accession>Q5KGJ3</accession>